<organism>
    <name type="scientific">Streptococcus pyogenes serotype M49 (strain NZ131)</name>
    <dbReference type="NCBI Taxonomy" id="471876"/>
    <lineage>
        <taxon>Bacteria</taxon>
        <taxon>Bacillati</taxon>
        <taxon>Bacillota</taxon>
        <taxon>Bacilli</taxon>
        <taxon>Lactobacillales</taxon>
        <taxon>Streptococcaceae</taxon>
        <taxon>Streptococcus</taxon>
    </lineage>
</organism>
<proteinExistence type="inferred from homology"/>
<name>Y990_STRPZ</name>
<reference key="1">
    <citation type="journal article" date="2008" name="J. Bacteriol.">
        <title>Genome sequence of a nephritogenic and highly transformable M49 strain of Streptococcus pyogenes.</title>
        <authorList>
            <person name="McShan W.M."/>
            <person name="Ferretti J.J."/>
            <person name="Karasawa T."/>
            <person name="Suvorov A.N."/>
            <person name="Lin S."/>
            <person name="Qin B."/>
            <person name="Jia H."/>
            <person name="Kenton S."/>
            <person name="Najar F."/>
            <person name="Wu H."/>
            <person name="Scott J."/>
            <person name="Roe B.A."/>
            <person name="Savic D.J."/>
        </authorList>
    </citation>
    <scope>NUCLEOTIDE SEQUENCE [LARGE SCALE GENOMIC DNA]</scope>
    <source>
        <strain>NZ131</strain>
    </source>
</reference>
<gene>
    <name type="ordered locus">Spy49_0990c</name>
</gene>
<feature type="chain" id="PRO_1000136033" description="UPF0223 protein Spy49_0990c">
    <location>
        <begin position="1"/>
        <end position="92"/>
    </location>
</feature>
<comment type="similarity">
    <text evidence="1">Belongs to the UPF0223 family.</text>
</comment>
<protein>
    <recommendedName>
        <fullName evidence="1">UPF0223 protein Spy49_0990c</fullName>
    </recommendedName>
</protein>
<dbReference type="EMBL" id="CP000829">
    <property type="protein sequence ID" value="ACI61290.1"/>
    <property type="molecule type" value="Genomic_DNA"/>
</dbReference>
<dbReference type="SMR" id="B5XLS8"/>
<dbReference type="KEGG" id="soz:Spy49_0990c"/>
<dbReference type="HOGENOM" id="CLU_166693_0_0_9"/>
<dbReference type="Proteomes" id="UP000001039">
    <property type="component" value="Chromosome"/>
</dbReference>
<dbReference type="Gene3D" id="1.10.220.80">
    <property type="entry name" value="BH2638-like"/>
    <property type="match status" value="1"/>
</dbReference>
<dbReference type="HAMAP" id="MF_01041">
    <property type="entry name" value="UPF0223"/>
    <property type="match status" value="1"/>
</dbReference>
<dbReference type="InterPro" id="IPR023324">
    <property type="entry name" value="BH2638-like_sf"/>
</dbReference>
<dbReference type="InterPro" id="IPR007920">
    <property type="entry name" value="UPF0223"/>
</dbReference>
<dbReference type="NCBIfam" id="NF003353">
    <property type="entry name" value="PRK04387.1"/>
    <property type="match status" value="1"/>
</dbReference>
<dbReference type="Pfam" id="PF05256">
    <property type="entry name" value="UPF0223"/>
    <property type="match status" value="1"/>
</dbReference>
<dbReference type="PIRSF" id="PIRSF037260">
    <property type="entry name" value="UPF0223"/>
    <property type="match status" value="1"/>
</dbReference>
<dbReference type="SUPFAM" id="SSF158504">
    <property type="entry name" value="BH2638-like"/>
    <property type="match status" value="1"/>
</dbReference>
<accession>B5XLS8</accession>
<sequence>MSGNYYYPLDLSWSTEEISSVLHFLNKVELAYEKKVDAKQLLDSYKTYKTIVKSKAQEKQIDRDFQKVSGYSTYQVVKKAKAIEKGFFSLGN</sequence>
<evidence type="ECO:0000255" key="1">
    <source>
        <dbReference type="HAMAP-Rule" id="MF_01041"/>
    </source>
</evidence>